<reference key="1">
    <citation type="journal article" date="2008" name="PLoS Genet.">
        <title>Complete genome sequence of the complex carbohydrate-degrading marine bacterium, Saccharophagus degradans strain 2-40 T.</title>
        <authorList>
            <person name="Weiner R.M."/>
            <person name="Taylor L.E. II"/>
            <person name="Henrissat B."/>
            <person name="Hauser L."/>
            <person name="Land M."/>
            <person name="Coutinho P.M."/>
            <person name="Rancurel C."/>
            <person name="Saunders E.H."/>
            <person name="Longmire A.G."/>
            <person name="Zhang H."/>
            <person name="Bayer E.A."/>
            <person name="Gilbert H.J."/>
            <person name="Larimer F."/>
            <person name="Zhulin I.B."/>
            <person name="Ekborg N.A."/>
            <person name="Lamed R."/>
            <person name="Richardson P.M."/>
            <person name="Borovok I."/>
            <person name="Hutcheson S."/>
        </authorList>
    </citation>
    <scope>NUCLEOTIDE SEQUENCE [LARGE SCALE GENOMIC DNA]</scope>
    <source>
        <strain>2-40 / ATCC 43961 / DSM 17024</strain>
    </source>
</reference>
<organism>
    <name type="scientific">Saccharophagus degradans (strain 2-40 / ATCC 43961 / DSM 17024)</name>
    <dbReference type="NCBI Taxonomy" id="203122"/>
    <lineage>
        <taxon>Bacteria</taxon>
        <taxon>Pseudomonadati</taxon>
        <taxon>Pseudomonadota</taxon>
        <taxon>Gammaproteobacteria</taxon>
        <taxon>Cellvibrionales</taxon>
        <taxon>Cellvibrionaceae</taxon>
        <taxon>Saccharophagus</taxon>
    </lineage>
</organism>
<sequence>MGESIAQQRGPFARRLQEYAASIELTLSEQQVNQLLDYLELFEKWNKAYNLSAIRDAEGMFTKHLLDSLSIAPHLTGERFIDVGTGGGLPGIPMAICFPQRHFTLLDSAGKKVRFLFQVKQALGLSNVDTQNRRVETFQPQPQFDGVISRAFASITYMLTWCNHLIHDDGRFWAMKGVMPNSELSELPKKYIVKASHALHVPNLEGERCLIELALAQESNSKA</sequence>
<evidence type="ECO:0000255" key="1">
    <source>
        <dbReference type="HAMAP-Rule" id="MF_00074"/>
    </source>
</evidence>
<feature type="chain" id="PRO_0000335423" description="Ribosomal RNA small subunit methyltransferase G">
    <location>
        <begin position="1"/>
        <end position="223"/>
    </location>
</feature>
<feature type="binding site" evidence="1">
    <location>
        <position position="84"/>
    </location>
    <ligand>
        <name>S-adenosyl-L-methionine</name>
        <dbReference type="ChEBI" id="CHEBI:59789"/>
    </ligand>
</feature>
<feature type="binding site" evidence="1">
    <location>
        <position position="89"/>
    </location>
    <ligand>
        <name>S-adenosyl-L-methionine</name>
        <dbReference type="ChEBI" id="CHEBI:59789"/>
    </ligand>
</feature>
<feature type="binding site" evidence="1">
    <location>
        <begin position="135"/>
        <end position="136"/>
    </location>
    <ligand>
        <name>S-adenosyl-L-methionine</name>
        <dbReference type="ChEBI" id="CHEBI:59789"/>
    </ligand>
</feature>
<feature type="binding site" evidence="1">
    <location>
        <position position="150"/>
    </location>
    <ligand>
        <name>S-adenosyl-L-methionine</name>
        <dbReference type="ChEBI" id="CHEBI:59789"/>
    </ligand>
</feature>
<gene>
    <name evidence="1" type="primary">rsmG</name>
    <name type="ordered locus">Sde_4011</name>
</gene>
<comment type="function">
    <text evidence="1">Specifically methylates the N7 position of guanine in position 527 of 16S rRNA.</text>
</comment>
<comment type="catalytic activity">
    <reaction evidence="1">
        <text>guanosine(527) in 16S rRNA + S-adenosyl-L-methionine = N(7)-methylguanosine(527) in 16S rRNA + S-adenosyl-L-homocysteine</text>
        <dbReference type="Rhea" id="RHEA:42732"/>
        <dbReference type="Rhea" id="RHEA-COMP:10209"/>
        <dbReference type="Rhea" id="RHEA-COMP:10210"/>
        <dbReference type="ChEBI" id="CHEBI:57856"/>
        <dbReference type="ChEBI" id="CHEBI:59789"/>
        <dbReference type="ChEBI" id="CHEBI:74269"/>
        <dbReference type="ChEBI" id="CHEBI:74480"/>
        <dbReference type="EC" id="2.1.1.170"/>
    </reaction>
</comment>
<comment type="subcellular location">
    <subcellularLocation>
        <location evidence="1">Cytoplasm</location>
    </subcellularLocation>
</comment>
<comment type="similarity">
    <text evidence="1">Belongs to the methyltransferase superfamily. RNA methyltransferase RsmG family.</text>
</comment>
<accession>Q21DG3</accession>
<keyword id="KW-0963">Cytoplasm</keyword>
<keyword id="KW-0489">Methyltransferase</keyword>
<keyword id="KW-1185">Reference proteome</keyword>
<keyword id="KW-0698">rRNA processing</keyword>
<keyword id="KW-0949">S-adenosyl-L-methionine</keyword>
<keyword id="KW-0808">Transferase</keyword>
<name>RSMG_SACD2</name>
<protein>
    <recommendedName>
        <fullName evidence="1">Ribosomal RNA small subunit methyltransferase G</fullName>
        <ecNumber evidence="1">2.1.1.170</ecNumber>
    </recommendedName>
    <alternativeName>
        <fullName evidence="1">16S rRNA 7-methylguanosine methyltransferase</fullName>
        <shortName evidence="1">16S rRNA m7G methyltransferase</shortName>
    </alternativeName>
</protein>
<dbReference type="EC" id="2.1.1.170" evidence="1"/>
<dbReference type="EMBL" id="CP000282">
    <property type="protein sequence ID" value="ABD83266.1"/>
    <property type="molecule type" value="Genomic_DNA"/>
</dbReference>
<dbReference type="RefSeq" id="WP_011470481.1">
    <property type="nucleotide sequence ID" value="NC_007912.1"/>
</dbReference>
<dbReference type="SMR" id="Q21DG3"/>
<dbReference type="STRING" id="203122.Sde_4011"/>
<dbReference type="GeneID" id="98615602"/>
<dbReference type="KEGG" id="sde:Sde_4011"/>
<dbReference type="eggNOG" id="COG0357">
    <property type="taxonomic scope" value="Bacteria"/>
</dbReference>
<dbReference type="HOGENOM" id="CLU_065341_2_2_6"/>
<dbReference type="Proteomes" id="UP000001947">
    <property type="component" value="Chromosome"/>
</dbReference>
<dbReference type="GO" id="GO:0005829">
    <property type="term" value="C:cytosol"/>
    <property type="evidence" value="ECO:0007669"/>
    <property type="project" value="TreeGrafter"/>
</dbReference>
<dbReference type="GO" id="GO:0070043">
    <property type="term" value="F:rRNA (guanine-N7-)-methyltransferase activity"/>
    <property type="evidence" value="ECO:0007669"/>
    <property type="project" value="UniProtKB-UniRule"/>
</dbReference>
<dbReference type="CDD" id="cd02440">
    <property type="entry name" value="AdoMet_MTases"/>
    <property type="match status" value="1"/>
</dbReference>
<dbReference type="Gene3D" id="3.40.50.150">
    <property type="entry name" value="Vaccinia Virus protein VP39"/>
    <property type="match status" value="1"/>
</dbReference>
<dbReference type="HAMAP" id="MF_00074">
    <property type="entry name" value="16SrRNA_methyltr_G"/>
    <property type="match status" value="1"/>
</dbReference>
<dbReference type="InterPro" id="IPR003682">
    <property type="entry name" value="rRNA_ssu_MeTfrase_G"/>
</dbReference>
<dbReference type="InterPro" id="IPR029063">
    <property type="entry name" value="SAM-dependent_MTases_sf"/>
</dbReference>
<dbReference type="NCBIfam" id="TIGR00138">
    <property type="entry name" value="rsmG_gidB"/>
    <property type="match status" value="1"/>
</dbReference>
<dbReference type="PANTHER" id="PTHR31760">
    <property type="entry name" value="S-ADENOSYL-L-METHIONINE-DEPENDENT METHYLTRANSFERASES SUPERFAMILY PROTEIN"/>
    <property type="match status" value="1"/>
</dbReference>
<dbReference type="PANTHER" id="PTHR31760:SF0">
    <property type="entry name" value="S-ADENOSYL-L-METHIONINE-DEPENDENT METHYLTRANSFERASES SUPERFAMILY PROTEIN"/>
    <property type="match status" value="1"/>
</dbReference>
<dbReference type="Pfam" id="PF02527">
    <property type="entry name" value="GidB"/>
    <property type="match status" value="1"/>
</dbReference>
<dbReference type="PIRSF" id="PIRSF003078">
    <property type="entry name" value="GidB"/>
    <property type="match status" value="1"/>
</dbReference>
<dbReference type="SUPFAM" id="SSF53335">
    <property type="entry name" value="S-adenosyl-L-methionine-dependent methyltransferases"/>
    <property type="match status" value="1"/>
</dbReference>
<proteinExistence type="inferred from homology"/>